<keyword id="KW-0002">3D-structure</keyword>
<keyword id="KW-0067">ATP-binding</keyword>
<keyword id="KW-0460">Magnesium</keyword>
<keyword id="KW-0547">Nucleotide-binding</keyword>
<keyword id="KW-0808">Transferase</keyword>
<keyword id="KW-0819">tRNA processing</keyword>
<feature type="chain" id="PRO_0000163978" description="tRNA dimethylallyltransferase">
    <location>
        <begin position="1"/>
        <end position="332"/>
    </location>
</feature>
<feature type="region of interest" description="Interaction with substrate tRNA" evidence="1">
    <location>
        <begin position="39"/>
        <end position="42"/>
    </location>
</feature>
<feature type="region of interest" description="Interaction with substrate tRNA" evidence="1">
    <location>
        <begin position="167"/>
        <end position="171"/>
    </location>
</feature>
<feature type="region of interest" description="Interaction with substrate tRNA" evidence="1">
    <location>
        <begin position="245"/>
        <end position="250"/>
    </location>
</feature>
<feature type="region of interest" description="Interaction with substrate tRNA" evidence="1">
    <location>
        <begin position="278"/>
        <end position="285"/>
    </location>
</feature>
<feature type="region of interest" description="Disordered" evidence="3">
    <location>
        <begin position="312"/>
        <end position="332"/>
    </location>
</feature>
<feature type="compositionally biased region" description="Basic residues" evidence="3">
    <location>
        <begin position="320"/>
        <end position="332"/>
    </location>
</feature>
<feature type="binding site" evidence="2">
    <location>
        <begin position="14"/>
        <end position="21"/>
    </location>
    <ligand>
        <name>ATP</name>
        <dbReference type="ChEBI" id="CHEBI:30616"/>
    </ligand>
</feature>
<feature type="binding site" evidence="1">
    <location>
        <begin position="16"/>
        <end position="21"/>
    </location>
    <ligand>
        <name>substrate</name>
    </ligand>
</feature>
<feature type="site" description="Interaction with substrate tRNA" evidence="1">
    <location>
        <position position="105"/>
    </location>
</feature>
<feature type="strand" evidence="5">
    <location>
        <begin position="8"/>
        <end position="13"/>
    </location>
</feature>
<feature type="helix" evidence="5">
    <location>
        <begin position="20"/>
        <end position="30"/>
    </location>
</feature>
<feature type="strand" evidence="5">
    <location>
        <begin position="33"/>
        <end position="37"/>
    </location>
</feature>
<feature type="turn" evidence="5">
    <location>
        <begin position="49"/>
        <end position="52"/>
    </location>
</feature>
<feature type="turn" evidence="5">
    <location>
        <begin position="56"/>
        <end position="61"/>
    </location>
</feature>
<feature type="strand" evidence="5">
    <location>
        <begin position="64"/>
        <end position="68"/>
    </location>
</feature>
<feature type="helix" evidence="5">
    <location>
        <begin position="78"/>
        <end position="94"/>
    </location>
</feature>
<feature type="strand" evidence="5">
    <location>
        <begin position="98"/>
        <end position="102"/>
    </location>
</feature>
<feature type="helix" evidence="5">
    <location>
        <begin position="106"/>
        <end position="113"/>
    </location>
</feature>
<feature type="helix" evidence="5">
    <location>
        <begin position="125"/>
        <end position="136"/>
    </location>
</feature>
<feature type="strand" evidence="5">
    <location>
        <begin position="139"/>
        <end position="141"/>
    </location>
</feature>
<feature type="helix" evidence="5">
    <location>
        <begin position="143"/>
        <end position="153"/>
    </location>
</feature>
<feature type="helix" evidence="5">
    <location>
        <begin position="155"/>
        <end position="160"/>
    </location>
</feature>
<feature type="helix" evidence="5">
    <location>
        <begin position="166"/>
        <end position="179"/>
    </location>
</feature>
<feature type="helix" evidence="5">
    <location>
        <begin position="184"/>
        <end position="192"/>
    </location>
</feature>
<feature type="strand" evidence="5">
    <location>
        <begin position="196"/>
        <end position="204"/>
    </location>
</feature>
<feature type="helix" evidence="5">
    <location>
        <begin position="207"/>
        <end position="223"/>
    </location>
</feature>
<feature type="helix" evidence="5">
    <location>
        <begin position="226"/>
        <end position="235"/>
    </location>
</feature>
<feature type="helix" evidence="5">
    <location>
        <begin position="243"/>
        <end position="245"/>
    </location>
</feature>
<feature type="turn" evidence="5">
    <location>
        <begin position="247"/>
        <end position="251"/>
    </location>
</feature>
<feature type="helix" evidence="5">
    <location>
        <begin position="252"/>
        <end position="257"/>
    </location>
</feature>
<feature type="helix" evidence="5">
    <location>
        <begin position="262"/>
        <end position="286"/>
    </location>
</feature>
<feature type="strand" evidence="5">
    <location>
        <begin position="291"/>
        <end position="294"/>
    </location>
</feature>
<feature type="turn" evidence="5">
    <location>
        <begin position="295"/>
        <end position="297"/>
    </location>
</feature>
<feature type="helix" evidence="5">
    <location>
        <begin position="300"/>
        <end position="314"/>
    </location>
</feature>
<sequence length="332" mass="38526">MTEMTKPFLIVIVGPTASGKTELSIEVAKKFNGEIISGDSMQVYQGMDIGTAKVTTEEMEGIPHYMIDILPPDASFSAYEFKKRAEKYIKDITRRGKVPIIAGGTGLYIQSLLYNYAFEDESISEDKMKQVKLKLKELEHLNNNKLHEYLASFDKESAKDIHPNNRKRVLRAIEYYLKTKKLLSSRKKVQQFTENYDTLLIGIEMSRETLYLRINKRVDIMLGHGLFNEVQHLVEQGFEASQSMQAIGYKELVPVIKGNISMENAVEKLKQHSRQYAKRQLTWFKNKMNVHWLNKERMSLQMMLDEITTQINKRSSNHDCKRKHPRPSTREL</sequence>
<gene>
    <name type="primary">miaA</name>
    <name type="ordered locus">SE_0981</name>
</gene>
<organism>
    <name type="scientific">Staphylococcus epidermidis (strain ATCC 12228 / FDA PCI 1200)</name>
    <dbReference type="NCBI Taxonomy" id="176280"/>
    <lineage>
        <taxon>Bacteria</taxon>
        <taxon>Bacillati</taxon>
        <taxon>Bacillota</taxon>
        <taxon>Bacilli</taxon>
        <taxon>Bacillales</taxon>
        <taxon>Staphylococcaceae</taxon>
        <taxon>Staphylococcus</taxon>
    </lineage>
</organism>
<protein>
    <recommendedName>
        <fullName>tRNA dimethylallyltransferase</fullName>
        <ecNumber>2.5.1.75</ecNumber>
    </recommendedName>
    <alternativeName>
        <fullName>Dimethylallyl diphosphate:tRNA dimethylallyltransferase</fullName>
        <shortName>DMAPP:tRNA dimethylallyltransferase</shortName>
        <shortName>DMATase</shortName>
    </alternativeName>
    <alternativeName>
        <fullName>Isopentenyl-diphosphate:tRNA isopentenyltransferase</fullName>
        <shortName>IPP transferase</shortName>
        <shortName>IPPT</shortName>
        <shortName>IPTase</shortName>
    </alternativeName>
</protein>
<accession>Q8CQL3</accession>
<reference key="1">
    <citation type="journal article" date="2003" name="Mol. Microbiol.">
        <title>Genome-based analysis of virulence genes in a non-biofilm-forming Staphylococcus epidermidis strain (ATCC 12228).</title>
        <authorList>
            <person name="Zhang Y.-Q."/>
            <person name="Ren S.-X."/>
            <person name="Li H.-L."/>
            <person name="Wang Y.-X."/>
            <person name="Fu G."/>
            <person name="Yang J."/>
            <person name="Qin Z.-Q."/>
            <person name="Miao Y.-G."/>
            <person name="Wang W.-Y."/>
            <person name="Chen R.-S."/>
            <person name="Shen Y."/>
            <person name="Chen Z."/>
            <person name="Yuan Z.-H."/>
            <person name="Zhao G.-P."/>
            <person name="Qu D."/>
            <person name="Danchin A."/>
            <person name="Wen Y.-M."/>
        </authorList>
    </citation>
    <scope>NUCLEOTIDE SEQUENCE [LARGE SCALE GENOMIC DNA]</scope>
    <source>
        <strain>ATCC 12228 / FDA PCI 1200</strain>
    </source>
</reference>
<reference key="2">
    <citation type="submission" date="2009-02" db="PDB data bank">
        <title>Crystal structure of tRNA delta(2)-isopentenylpyrophosphate transferase (SE0981) from Staphylococcus epidermidis.</title>
        <authorList>
            <consortium name="Northeast structural genomics consortium (NESG)"/>
        </authorList>
    </citation>
    <scope>X-RAY CRYSTALLOGRAPHY (2.7 ANGSTROMS)</scope>
</reference>
<dbReference type="EC" id="2.5.1.75"/>
<dbReference type="EMBL" id="AE015929">
    <property type="protein sequence ID" value="AAO04578.1"/>
    <property type="molecule type" value="Genomic_DNA"/>
</dbReference>
<dbReference type="RefSeq" id="NP_764536.1">
    <property type="nucleotide sequence ID" value="NC_004461.1"/>
</dbReference>
<dbReference type="RefSeq" id="WP_002439583.1">
    <property type="nucleotide sequence ID" value="NZ_WBME01000001.1"/>
</dbReference>
<dbReference type="PDB" id="3D3Q">
    <property type="method" value="X-ray"/>
    <property type="resolution" value="2.70 A"/>
    <property type="chains" value="A/B=1-332"/>
</dbReference>
<dbReference type="PDBsum" id="3D3Q"/>
<dbReference type="SMR" id="Q8CQL3"/>
<dbReference type="GeneID" id="50018885"/>
<dbReference type="KEGG" id="sep:SE_0981"/>
<dbReference type="PATRIC" id="fig|176280.10.peg.955"/>
<dbReference type="eggNOG" id="COG0324">
    <property type="taxonomic scope" value="Bacteria"/>
</dbReference>
<dbReference type="HOGENOM" id="CLU_032616_0_1_9"/>
<dbReference type="OrthoDB" id="9776390at2"/>
<dbReference type="EvolutionaryTrace" id="Q8CQL3"/>
<dbReference type="Proteomes" id="UP000001411">
    <property type="component" value="Chromosome"/>
</dbReference>
<dbReference type="GO" id="GO:0005524">
    <property type="term" value="F:ATP binding"/>
    <property type="evidence" value="ECO:0007669"/>
    <property type="project" value="UniProtKB-UniRule"/>
</dbReference>
<dbReference type="GO" id="GO:0052381">
    <property type="term" value="F:tRNA dimethylallyltransferase activity"/>
    <property type="evidence" value="ECO:0007669"/>
    <property type="project" value="UniProtKB-UniRule"/>
</dbReference>
<dbReference type="GO" id="GO:0006400">
    <property type="term" value="P:tRNA modification"/>
    <property type="evidence" value="ECO:0007669"/>
    <property type="project" value="TreeGrafter"/>
</dbReference>
<dbReference type="Gene3D" id="1.10.20.140">
    <property type="match status" value="1"/>
</dbReference>
<dbReference type="Gene3D" id="3.40.50.300">
    <property type="entry name" value="P-loop containing nucleotide triphosphate hydrolases"/>
    <property type="match status" value="1"/>
</dbReference>
<dbReference type="HAMAP" id="MF_00185">
    <property type="entry name" value="IPP_trans"/>
    <property type="match status" value="1"/>
</dbReference>
<dbReference type="InterPro" id="IPR039657">
    <property type="entry name" value="Dimethylallyltransferase"/>
</dbReference>
<dbReference type="InterPro" id="IPR018022">
    <property type="entry name" value="IPT"/>
</dbReference>
<dbReference type="InterPro" id="IPR027417">
    <property type="entry name" value="P-loop_NTPase"/>
</dbReference>
<dbReference type="NCBIfam" id="TIGR00174">
    <property type="entry name" value="miaA"/>
    <property type="match status" value="1"/>
</dbReference>
<dbReference type="PANTHER" id="PTHR11088">
    <property type="entry name" value="TRNA DIMETHYLALLYLTRANSFERASE"/>
    <property type="match status" value="1"/>
</dbReference>
<dbReference type="PANTHER" id="PTHR11088:SF60">
    <property type="entry name" value="TRNA DIMETHYLALLYLTRANSFERASE"/>
    <property type="match status" value="1"/>
</dbReference>
<dbReference type="Pfam" id="PF01715">
    <property type="entry name" value="IPPT"/>
    <property type="match status" value="1"/>
</dbReference>
<dbReference type="SUPFAM" id="SSF52540">
    <property type="entry name" value="P-loop containing nucleoside triphosphate hydrolases"/>
    <property type="match status" value="2"/>
</dbReference>
<name>MIAA_STAES</name>
<evidence type="ECO:0000250" key="1"/>
<evidence type="ECO:0000255" key="2"/>
<evidence type="ECO:0000256" key="3">
    <source>
        <dbReference type="SAM" id="MobiDB-lite"/>
    </source>
</evidence>
<evidence type="ECO:0000305" key="4"/>
<evidence type="ECO:0007829" key="5">
    <source>
        <dbReference type="PDB" id="3D3Q"/>
    </source>
</evidence>
<proteinExistence type="evidence at protein level"/>
<comment type="function">
    <text evidence="1">Catalyzes the transfer of a dimethylallyl group onto the adenine at position 37 in tRNAs that read codons beginning with uridine, leading to the formation of N6-(dimethylallyl)adenosine (i(6)A).</text>
</comment>
<comment type="catalytic activity">
    <reaction>
        <text>adenosine(37) in tRNA + dimethylallyl diphosphate = N(6)-dimethylallyladenosine(37) in tRNA + diphosphate</text>
        <dbReference type="Rhea" id="RHEA:26482"/>
        <dbReference type="Rhea" id="RHEA-COMP:10162"/>
        <dbReference type="Rhea" id="RHEA-COMP:10375"/>
        <dbReference type="ChEBI" id="CHEBI:33019"/>
        <dbReference type="ChEBI" id="CHEBI:57623"/>
        <dbReference type="ChEBI" id="CHEBI:74411"/>
        <dbReference type="ChEBI" id="CHEBI:74415"/>
        <dbReference type="EC" id="2.5.1.75"/>
    </reaction>
</comment>
<comment type="cofactor">
    <cofactor evidence="1">
        <name>Mg(2+)</name>
        <dbReference type="ChEBI" id="CHEBI:18420"/>
    </cofactor>
</comment>
<comment type="subunit">
    <text evidence="1">Monomer.</text>
</comment>
<comment type="similarity">
    <text evidence="4">Belongs to the IPP transferase family.</text>
</comment>